<proteinExistence type="inferred from homology"/>
<name>SYV_AZOSB</name>
<gene>
    <name evidence="1" type="primary">valS</name>
    <name type="ordered locus">azo2907</name>
</gene>
<keyword id="KW-0030">Aminoacyl-tRNA synthetase</keyword>
<keyword id="KW-0067">ATP-binding</keyword>
<keyword id="KW-0175">Coiled coil</keyword>
<keyword id="KW-0963">Cytoplasm</keyword>
<keyword id="KW-0436">Ligase</keyword>
<keyword id="KW-0547">Nucleotide-binding</keyword>
<keyword id="KW-0648">Protein biosynthesis</keyword>
<keyword id="KW-1185">Reference proteome</keyword>
<evidence type="ECO:0000255" key="1">
    <source>
        <dbReference type="HAMAP-Rule" id="MF_02004"/>
    </source>
</evidence>
<comment type="function">
    <text evidence="1">Catalyzes the attachment of valine to tRNA(Val). As ValRS can inadvertently accommodate and process structurally similar amino acids such as threonine, to avoid such errors, it has a 'posttransfer' editing activity that hydrolyzes mischarged Thr-tRNA(Val) in a tRNA-dependent manner.</text>
</comment>
<comment type="catalytic activity">
    <reaction evidence="1">
        <text>tRNA(Val) + L-valine + ATP = L-valyl-tRNA(Val) + AMP + diphosphate</text>
        <dbReference type="Rhea" id="RHEA:10704"/>
        <dbReference type="Rhea" id="RHEA-COMP:9672"/>
        <dbReference type="Rhea" id="RHEA-COMP:9708"/>
        <dbReference type="ChEBI" id="CHEBI:30616"/>
        <dbReference type="ChEBI" id="CHEBI:33019"/>
        <dbReference type="ChEBI" id="CHEBI:57762"/>
        <dbReference type="ChEBI" id="CHEBI:78442"/>
        <dbReference type="ChEBI" id="CHEBI:78537"/>
        <dbReference type="ChEBI" id="CHEBI:456215"/>
        <dbReference type="EC" id="6.1.1.9"/>
    </reaction>
</comment>
<comment type="subunit">
    <text evidence="1">Monomer.</text>
</comment>
<comment type="subcellular location">
    <subcellularLocation>
        <location evidence="1">Cytoplasm</location>
    </subcellularLocation>
</comment>
<comment type="domain">
    <text evidence="1">ValRS has two distinct active sites: one for aminoacylation and one for editing. The misactivated threonine is translocated from the active site to the editing site.</text>
</comment>
<comment type="domain">
    <text evidence="1">The C-terminal coiled-coil domain is crucial for aminoacylation activity.</text>
</comment>
<comment type="similarity">
    <text evidence="1">Belongs to the class-I aminoacyl-tRNA synthetase family. ValS type 1 subfamily.</text>
</comment>
<sequence length="998" mass="112276">MELAKSFEPAAIEARRYPEWESRGYFDAGLDTSNPNAFCILLPPPNVTGTLHMGHGFNQTIMDALTRYHRMRGDNTLWQPGTDHAGIATQIVVERQLDAQGVSRHDLGREKFLEKVWEWKEYSGGTITRQMRRLGTSPDWKRERFTMDEGLSKTVTETFVRLYNEGLIYRGKRLVNWDPKLGTAVSDLEVVSEEEDGKLYHILYPFSDGPVGDLRGLTVATTRPETLLGDVAVMVHPEDERYAHLIGKTVALPLTGRHIPIIADDYVDREFGTGCVKVTPAHDFNDYAVGQRHQLDMIVVLKLDGSVPAVAERYTTDGQPREGVAMPAGVAGLDRVPARDKVVAELEALGLMLEIKAHKLQVPRGDRTNVVIEPMLTDQWFVAMSKPGADGKSITAKALEVVASGEIKFYPENWVNTYNQWLNNIQDWCISRQLWWGHRIPAWYDDEGRIYVAANEEAALHAWKADLEAEIARLQGEVQSRQSQGQTAEQYPDLAERLSVLHARYEEGTLRQEEDVLDTWYSSALWPFSTLDWTPEWPQKSNPALDLYLPSTVLVTGFDIIFFWVARMVMMTKHITGKIPFKHVYVHGLIRDAEGQKMSKSKGNVLDPIDLIDGIGIDELVQKRTFGLMNPKQAQSIEKKTRKEFPEGIPAFGTDALRFTFASLASPGRDIKFDLARCEGYRNFCNKLWNATRFVLMNCEGQDCGMDPHEPGTCVPGGYLDFSFADRWIVSRLQRTEAEVAAQFEAYRFDLVARAVYEFVWDEYCDWYLELAKVQIQTGTPEQQRATRRTLLRVLETVLRLAHPLIPFITEELWETVAPLAGRKDADSIMLARYPQADMGRIDEASEAQVAELKALIYACRNLRGEMNISPAQRLPLVAAGNAELLGRYAPYLAGLAKLSEVEIVAEIGADELAPVAVAGETRLMLKVEIDIAAERERLTKEIARLEGEVAKAEGKLGNASFVDRAPAAVVQQERDRLAGFKATLEQLRPQLAKLAGR</sequence>
<organism>
    <name type="scientific">Azoarcus sp. (strain BH72)</name>
    <dbReference type="NCBI Taxonomy" id="418699"/>
    <lineage>
        <taxon>Bacteria</taxon>
        <taxon>Pseudomonadati</taxon>
        <taxon>Pseudomonadota</taxon>
        <taxon>Betaproteobacteria</taxon>
        <taxon>Rhodocyclales</taxon>
        <taxon>Zoogloeaceae</taxon>
        <taxon>Azoarcus</taxon>
    </lineage>
</organism>
<feature type="chain" id="PRO_1000022163" description="Valine--tRNA ligase">
    <location>
        <begin position="1"/>
        <end position="998"/>
    </location>
</feature>
<feature type="coiled-coil region" evidence="1">
    <location>
        <begin position="455"/>
        <end position="486"/>
    </location>
</feature>
<feature type="coiled-coil region" evidence="1">
    <location>
        <begin position="929"/>
        <end position="989"/>
    </location>
</feature>
<feature type="short sequence motif" description="'HIGH' region">
    <location>
        <begin position="45"/>
        <end position="55"/>
    </location>
</feature>
<feature type="short sequence motif" description="'KMSKS' region">
    <location>
        <begin position="597"/>
        <end position="601"/>
    </location>
</feature>
<feature type="binding site" evidence="1">
    <location>
        <position position="600"/>
    </location>
    <ligand>
        <name>ATP</name>
        <dbReference type="ChEBI" id="CHEBI:30616"/>
    </ligand>
</feature>
<protein>
    <recommendedName>
        <fullName evidence="1">Valine--tRNA ligase</fullName>
        <ecNumber evidence="1">6.1.1.9</ecNumber>
    </recommendedName>
    <alternativeName>
        <fullName evidence="1">Valyl-tRNA synthetase</fullName>
        <shortName evidence="1">ValRS</shortName>
    </alternativeName>
</protein>
<reference key="1">
    <citation type="journal article" date="2006" name="Nat. Biotechnol.">
        <title>Complete genome of the mutualistic, N2-fixing grass endophyte Azoarcus sp. strain BH72.</title>
        <authorList>
            <person name="Krause A."/>
            <person name="Ramakumar A."/>
            <person name="Bartels D."/>
            <person name="Battistoni F."/>
            <person name="Bekel T."/>
            <person name="Boch J."/>
            <person name="Boehm M."/>
            <person name="Friedrich F."/>
            <person name="Hurek T."/>
            <person name="Krause L."/>
            <person name="Linke B."/>
            <person name="McHardy A.C."/>
            <person name="Sarkar A."/>
            <person name="Schneiker S."/>
            <person name="Syed A.A."/>
            <person name="Thauer R."/>
            <person name="Vorhoelter F.-J."/>
            <person name="Weidner S."/>
            <person name="Puehler A."/>
            <person name="Reinhold-Hurek B."/>
            <person name="Kaiser O."/>
            <person name="Goesmann A."/>
        </authorList>
    </citation>
    <scope>NUCLEOTIDE SEQUENCE [LARGE SCALE GENOMIC DNA]</scope>
    <source>
        <strain>BH72</strain>
    </source>
</reference>
<accession>A1K9L8</accession>
<dbReference type="EC" id="6.1.1.9" evidence="1"/>
<dbReference type="EMBL" id="AM406670">
    <property type="protein sequence ID" value="CAL95523.1"/>
    <property type="molecule type" value="Genomic_DNA"/>
</dbReference>
<dbReference type="RefSeq" id="WP_011766633.1">
    <property type="nucleotide sequence ID" value="NC_008702.1"/>
</dbReference>
<dbReference type="SMR" id="A1K9L8"/>
<dbReference type="STRING" id="62928.azo2907"/>
<dbReference type="KEGG" id="azo:azo2907"/>
<dbReference type="eggNOG" id="COG0525">
    <property type="taxonomic scope" value="Bacteria"/>
</dbReference>
<dbReference type="HOGENOM" id="CLU_001493_0_2_4"/>
<dbReference type="Proteomes" id="UP000002588">
    <property type="component" value="Chromosome"/>
</dbReference>
<dbReference type="GO" id="GO:0005829">
    <property type="term" value="C:cytosol"/>
    <property type="evidence" value="ECO:0007669"/>
    <property type="project" value="TreeGrafter"/>
</dbReference>
<dbReference type="GO" id="GO:0002161">
    <property type="term" value="F:aminoacyl-tRNA deacylase activity"/>
    <property type="evidence" value="ECO:0007669"/>
    <property type="project" value="InterPro"/>
</dbReference>
<dbReference type="GO" id="GO:0005524">
    <property type="term" value="F:ATP binding"/>
    <property type="evidence" value="ECO:0007669"/>
    <property type="project" value="UniProtKB-UniRule"/>
</dbReference>
<dbReference type="GO" id="GO:0004832">
    <property type="term" value="F:valine-tRNA ligase activity"/>
    <property type="evidence" value="ECO:0007669"/>
    <property type="project" value="UniProtKB-UniRule"/>
</dbReference>
<dbReference type="GO" id="GO:0006438">
    <property type="term" value="P:valyl-tRNA aminoacylation"/>
    <property type="evidence" value="ECO:0007669"/>
    <property type="project" value="UniProtKB-UniRule"/>
</dbReference>
<dbReference type="CDD" id="cd07962">
    <property type="entry name" value="Anticodon_Ia_Val"/>
    <property type="match status" value="1"/>
</dbReference>
<dbReference type="CDD" id="cd00817">
    <property type="entry name" value="ValRS_core"/>
    <property type="match status" value="1"/>
</dbReference>
<dbReference type="FunFam" id="1.10.287.380:FF:000001">
    <property type="entry name" value="Valine--tRNA ligase"/>
    <property type="match status" value="1"/>
</dbReference>
<dbReference type="FunFam" id="1.10.730.10:FF:000009">
    <property type="entry name" value="Valine--tRNA ligase, mitochondrial"/>
    <property type="match status" value="1"/>
</dbReference>
<dbReference type="FunFam" id="3.40.50.620:FF:000020">
    <property type="entry name" value="Valine--tRNA ligase, mitochondrial"/>
    <property type="match status" value="1"/>
</dbReference>
<dbReference type="Gene3D" id="3.40.50.620">
    <property type="entry name" value="HUPs"/>
    <property type="match status" value="2"/>
</dbReference>
<dbReference type="Gene3D" id="1.10.730.10">
    <property type="entry name" value="Isoleucyl-tRNA Synthetase, Domain 1"/>
    <property type="match status" value="1"/>
</dbReference>
<dbReference type="Gene3D" id="1.10.287.380">
    <property type="entry name" value="Valyl-tRNA synthetase, C-terminal domain"/>
    <property type="match status" value="1"/>
</dbReference>
<dbReference type="Gene3D" id="3.90.740.10">
    <property type="entry name" value="Valyl/Leucyl/Isoleucyl-tRNA synthetase, editing domain"/>
    <property type="match status" value="1"/>
</dbReference>
<dbReference type="HAMAP" id="MF_02004">
    <property type="entry name" value="Val_tRNA_synth_type1"/>
    <property type="match status" value="1"/>
</dbReference>
<dbReference type="InterPro" id="IPR001412">
    <property type="entry name" value="aa-tRNA-synth_I_CS"/>
</dbReference>
<dbReference type="InterPro" id="IPR002300">
    <property type="entry name" value="aa-tRNA-synth_Ia"/>
</dbReference>
<dbReference type="InterPro" id="IPR033705">
    <property type="entry name" value="Anticodon_Ia_Val"/>
</dbReference>
<dbReference type="InterPro" id="IPR013155">
    <property type="entry name" value="M/V/L/I-tRNA-synth_anticd-bd"/>
</dbReference>
<dbReference type="InterPro" id="IPR014729">
    <property type="entry name" value="Rossmann-like_a/b/a_fold"/>
</dbReference>
<dbReference type="InterPro" id="IPR010978">
    <property type="entry name" value="tRNA-bd_arm"/>
</dbReference>
<dbReference type="InterPro" id="IPR009080">
    <property type="entry name" value="tRNAsynth_Ia_anticodon-bd"/>
</dbReference>
<dbReference type="InterPro" id="IPR037118">
    <property type="entry name" value="Val-tRNA_synth_C_sf"/>
</dbReference>
<dbReference type="InterPro" id="IPR019499">
    <property type="entry name" value="Val-tRNA_synth_tRNA-bd"/>
</dbReference>
<dbReference type="InterPro" id="IPR009008">
    <property type="entry name" value="Val/Leu/Ile-tRNA-synth_edit"/>
</dbReference>
<dbReference type="InterPro" id="IPR002303">
    <property type="entry name" value="Valyl-tRNA_ligase"/>
</dbReference>
<dbReference type="NCBIfam" id="NF004349">
    <property type="entry name" value="PRK05729.1"/>
    <property type="match status" value="1"/>
</dbReference>
<dbReference type="NCBIfam" id="TIGR00422">
    <property type="entry name" value="valS"/>
    <property type="match status" value="1"/>
</dbReference>
<dbReference type="PANTHER" id="PTHR11946:SF93">
    <property type="entry name" value="VALINE--TRNA LIGASE, CHLOROPLASTIC_MITOCHONDRIAL 2"/>
    <property type="match status" value="1"/>
</dbReference>
<dbReference type="PANTHER" id="PTHR11946">
    <property type="entry name" value="VALYL-TRNA SYNTHETASES"/>
    <property type="match status" value="1"/>
</dbReference>
<dbReference type="Pfam" id="PF08264">
    <property type="entry name" value="Anticodon_1"/>
    <property type="match status" value="1"/>
</dbReference>
<dbReference type="Pfam" id="PF00133">
    <property type="entry name" value="tRNA-synt_1"/>
    <property type="match status" value="1"/>
</dbReference>
<dbReference type="Pfam" id="PF10458">
    <property type="entry name" value="Val_tRNA-synt_C"/>
    <property type="match status" value="1"/>
</dbReference>
<dbReference type="PRINTS" id="PR00986">
    <property type="entry name" value="TRNASYNTHVAL"/>
</dbReference>
<dbReference type="SUPFAM" id="SSF47323">
    <property type="entry name" value="Anticodon-binding domain of a subclass of class I aminoacyl-tRNA synthetases"/>
    <property type="match status" value="1"/>
</dbReference>
<dbReference type="SUPFAM" id="SSF52374">
    <property type="entry name" value="Nucleotidylyl transferase"/>
    <property type="match status" value="1"/>
</dbReference>
<dbReference type="SUPFAM" id="SSF46589">
    <property type="entry name" value="tRNA-binding arm"/>
    <property type="match status" value="1"/>
</dbReference>
<dbReference type="SUPFAM" id="SSF50677">
    <property type="entry name" value="ValRS/IleRS/LeuRS editing domain"/>
    <property type="match status" value="1"/>
</dbReference>
<dbReference type="PROSITE" id="PS00178">
    <property type="entry name" value="AA_TRNA_LIGASE_I"/>
    <property type="match status" value="1"/>
</dbReference>